<organism>
    <name type="scientific">Influenza A virus (strain A/Aichi/2/1968 H3N2)</name>
    <dbReference type="NCBI Taxonomy" id="387139"/>
    <lineage>
        <taxon>Viruses</taxon>
        <taxon>Riboviria</taxon>
        <taxon>Orthornavirae</taxon>
        <taxon>Negarnaviricota</taxon>
        <taxon>Polyploviricotina</taxon>
        <taxon>Insthoviricetes</taxon>
        <taxon>Articulavirales</taxon>
        <taxon>Orthomyxoviridae</taxon>
        <taxon>Alphainfluenzavirus</taxon>
        <taxon>Alphainfluenzavirus influenzae</taxon>
        <taxon>Influenza A virus</taxon>
    </lineage>
</organism>
<sequence length="121" mass="14267">MDSNTVSSFQDILLRMSKMQLGSSSEDLNGMITQFESLKLYRDSLGEAVMRMGDLHSLQNRNGKWRGQLGQKFEEIRWLIEEVRHRLKTTENSFEQITFMQALQLLFEVEQEIRTFSFQLI</sequence>
<name>NEP_I68A0</name>
<gene>
    <name evidence="1" type="primary">NS</name>
</gene>
<keyword id="KW-0025">Alternative splicing</keyword>
<keyword id="KW-1048">Host nucleus</keyword>
<keyword id="KW-0945">Host-virus interaction</keyword>
<keyword id="KW-1185">Reference proteome</keyword>
<keyword id="KW-0813">Transport</keyword>
<keyword id="KW-0946">Virion</keyword>
<reference key="1">
    <citation type="journal article" date="1990" name="Proc. Natl. Acad. Sci. U.S.A.">
        <title>Mutation in NS2, a nonstructural protein of influenza A virus, extragenically causes aberrant replication and expression of the PA gene and leads to generation of defective interfering particles.</title>
        <authorList>
            <person name="Odagiri T."/>
            <person name="Tobita K."/>
        </authorList>
    </citation>
    <scope>NUCLEOTIDE SEQUENCE [GENOMIC RNA]</scope>
</reference>
<evidence type="ECO:0000255" key="1">
    <source>
        <dbReference type="HAMAP-Rule" id="MF_04067"/>
    </source>
</evidence>
<accession>Q02600</accession>
<organismHost>
    <name type="scientific">Aves</name>
    <dbReference type="NCBI Taxonomy" id="8782"/>
</organismHost>
<organismHost>
    <name type="scientific">Cetacea</name>
    <name type="common">whales</name>
    <dbReference type="NCBI Taxonomy" id="9721"/>
</organismHost>
<organismHost>
    <name type="scientific">Homo sapiens</name>
    <name type="common">Human</name>
    <dbReference type="NCBI Taxonomy" id="9606"/>
</organismHost>
<organismHost>
    <name type="scientific">Phocidae</name>
    <name type="common">true seals</name>
    <dbReference type="NCBI Taxonomy" id="9709"/>
</organismHost>
<organismHost>
    <name type="scientific">Sus scrofa</name>
    <name type="common">Pig</name>
    <dbReference type="NCBI Taxonomy" id="9823"/>
</organismHost>
<dbReference type="EMBL" id="M34829">
    <property type="protein sequence ID" value="AAA43085.1"/>
    <property type="molecule type" value="Genomic_RNA"/>
</dbReference>
<dbReference type="EMBL" id="D10571">
    <property type="protein sequence ID" value="BAA01427.1"/>
    <property type="molecule type" value="Genomic_RNA"/>
</dbReference>
<dbReference type="SMR" id="Q02600"/>
<dbReference type="Proteomes" id="UP000137932">
    <property type="component" value="Genome"/>
</dbReference>
<dbReference type="GO" id="GO:0042025">
    <property type="term" value="C:host cell nucleus"/>
    <property type="evidence" value="ECO:0007669"/>
    <property type="project" value="UniProtKB-SubCell"/>
</dbReference>
<dbReference type="GO" id="GO:0044423">
    <property type="term" value="C:virion component"/>
    <property type="evidence" value="ECO:0007669"/>
    <property type="project" value="UniProtKB-UniRule"/>
</dbReference>
<dbReference type="GO" id="GO:0039675">
    <property type="term" value="P:exit of virus from host cell nucleus through nuclear pore"/>
    <property type="evidence" value="ECO:0007669"/>
    <property type="project" value="UniProtKB-UniRule"/>
</dbReference>
<dbReference type="Gene3D" id="1.10.287.230">
    <property type="match status" value="1"/>
</dbReference>
<dbReference type="Gene3D" id="1.10.287.10">
    <property type="entry name" value="S15/NS1, RNA-binding"/>
    <property type="match status" value="1"/>
</dbReference>
<dbReference type="HAMAP" id="MF_04067">
    <property type="entry name" value="INFV_NEP"/>
    <property type="match status" value="1"/>
</dbReference>
<dbReference type="InterPro" id="IPR000968">
    <property type="entry name" value="Flu_NS2"/>
</dbReference>
<dbReference type="Pfam" id="PF00601">
    <property type="entry name" value="Flu_NS2"/>
    <property type="match status" value="1"/>
</dbReference>
<dbReference type="SUPFAM" id="SSF101156">
    <property type="entry name" value="Nonstructural protein ns2, Nep, M1-binding domain"/>
    <property type="match status" value="1"/>
</dbReference>
<feature type="chain" id="PRO_0000078973" description="Nuclear export protein">
    <location>
        <begin position="1"/>
        <end position="121"/>
    </location>
</feature>
<feature type="short sequence motif" description="Nuclear export signal" evidence="1">
    <location>
        <begin position="12"/>
        <end position="21"/>
    </location>
</feature>
<feature type="short sequence motif" description="Nuclear export signal" evidence="1">
    <location>
        <begin position="85"/>
        <end position="94"/>
    </location>
</feature>
<protein>
    <recommendedName>
        <fullName evidence="1">Nuclear export protein</fullName>
        <shortName evidence="1">NEP</shortName>
    </recommendedName>
    <alternativeName>
        <fullName evidence="1">Non-structural protein 2</fullName>
        <shortName evidence="1">NS2</shortName>
    </alternativeName>
</protein>
<comment type="function">
    <text evidence="1">Mediates the nuclear export of encapsidated genomic RNAs (ribonucleoproteins, RNPs). Acts as an adapter between viral RNPs complexes and the nuclear export machinery of the cell. Possesses no intrinsic RNA-binding activity, but includes a C-terminal M1-binding domain. This domain is believed to allow recognition of RNPs bound to the protein M1. Since protein M1 is not available in large quantities before late stages of infection, such an indirect recognition mechanism probably ensures that genomic RNPs are not exported from the host nucleus until sufficient quantities of viral mRNA and progeny genomic RNA have been synthesized. Furthermore, the RNPs enter the host cytoplasm only when associated with the M1 protein that is necessary to guide them to the plasma membrane. May down-regulate viral RNA synthesis when overproduced.</text>
</comment>
<comment type="subunit">
    <text evidence="1">Interacts with protein M1. May interact with host nucleoporin RAB/HRB and exportin XPO1/CRM1.</text>
</comment>
<comment type="subcellular location">
    <subcellularLocation>
        <location evidence="1">Virion</location>
    </subcellularLocation>
    <subcellularLocation>
        <location evidence="1">Host nucleus</location>
    </subcellularLocation>
</comment>
<comment type="alternative products">
    <event type="alternative splicing"/>
    <isoform>
        <id>Q02600-1</id>
        <name>NEP</name>
        <name>NS2</name>
        <sequence type="displayed"/>
    </isoform>
    <isoform>
        <id>P69277-1</id>
        <name>NS1</name>
        <sequence type="external"/>
    </isoform>
</comment>
<comment type="miscellaneous">
    <text>Average number present in a viral particle is estimated to be 130-200 molecules.</text>
</comment>
<comment type="similarity">
    <text evidence="1">Belongs to the influenza viruses NEP family.</text>
</comment>
<proteinExistence type="inferred from homology"/>